<proteinExistence type="evidence at protein level"/>
<keyword id="KW-0472">Membrane</keyword>
<keyword id="KW-0539">Nucleus</keyword>
<keyword id="KW-1185">Reference proteome</keyword>
<name>ISH1_SCHPO</name>
<sequence>MRSRSVASLGVLLAIVFYIFTYGFSTYRKNDTSAVKTWLEEHSIPYGSRSSPSDFQQFISESYDSLVPNLDKWSGHNLNSWLGKKTESSYLDAISNKIRKTGRKLSGSVEDARDATQEAWESQKASLFESWSDSQLRAFLARHSPQFAAKEKKGILEKLSPASLRETAAKEYDALTSKLGNTGDWIYDTWSDNELRTWLHDVGVPISSHESTRSHLLRKLKNYISTKADEAQPSVEAVKGKASEKAKQAGEFVSDKAGDAKELVNEKSSEAGQYAGQKMEEGGELLQEISKRRGRFGNWWANSGLKAYFDAHGIPAYQPSPIDQFYAHLRRQYYLKTNGYQALKSKAYEEASNVADSASSIASNVASGATEAYQGAASGASRFTEGAKTAAESVTSAFEHNKDTATSKAKQMKGKAASLGSTASEKVGEAADYAAETASKVASKAASKVRETIDETIIERWQDSKLKEFLFLRGVPVPQRSTKDQLLDLVRKHFNKGAVPNWAAYFDTLSSKELSAWIKEYKKHYHGKLHPSKDREHLFQNACNIYRAIAEKADKSVLQSIQSKFPKATVPGYDSWSNEDLKSALKEYGDSIGKVFNRKDAIERLKRHDILFYGPVVADKAKSGVSGFLRRVASFMGFGTRDVAEIKLGENIQKVKDTASKASSAVSSAGDYVETNVKKAQRVL</sequence>
<accession>Q9Y7X6</accession>
<accession>Q09149</accession>
<dbReference type="EMBL" id="U38783">
    <property type="protein sequence ID" value="AAC49262.1"/>
    <property type="status" value="ALT_FRAME"/>
    <property type="molecule type" value="Genomic_DNA"/>
</dbReference>
<dbReference type="EMBL" id="CU329671">
    <property type="protein sequence ID" value="CAB44764.1"/>
    <property type="molecule type" value="Genomic_DNA"/>
</dbReference>
<dbReference type="PIR" id="T40319">
    <property type="entry name" value="T40319"/>
</dbReference>
<dbReference type="RefSeq" id="NP_596041.1">
    <property type="nucleotide sequence ID" value="NM_001021951.2"/>
</dbReference>
<dbReference type="SMR" id="Q9Y7X6"/>
<dbReference type="BioGRID" id="277475">
    <property type="interactions" value="17"/>
</dbReference>
<dbReference type="FunCoup" id="Q9Y7X6">
    <property type="interactions" value="34"/>
</dbReference>
<dbReference type="IntAct" id="Q9Y7X6">
    <property type="interactions" value="3"/>
</dbReference>
<dbReference type="STRING" id="284812.Q9Y7X6"/>
<dbReference type="iPTMnet" id="Q9Y7X6"/>
<dbReference type="PaxDb" id="4896-SPBC365.12c.1"/>
<dbReference type="EnsemblFungi" id="SPBC365.12c.1">
    <property type="protein sequence ID" value="SPBC365.12c.1:pep"/>
    <property type="gene ID" value="SPBC365.12c"/>
</dbReference>
<dbReference type="GeneID" id="2540959"/>
<dbReference type="KEGG" id="spo:2540959"/>
<dbReference type="PomBase" id="SPBC365.12c">
    <property type="gene designation" value="ish1"/>
</dbReference>
<dbReference type="VEuPathDB" id="FungiDB:SPBC365.12c"/>
<dbReference type="eggNOG" id="ENOG502RNIV">
    <property type="taxonomic scope" value="Eukaryota"/>
</dbReference>
<dbReference type="HOGENOM" id="CLU_402333_0_0_1"/>
<dbReference type="InParanoid" id="Q9Y7X6"/>
<dbReference type="OMA" id="NACNIYR"/>
<dbReference type="PhylomeDB" id="Q9Y7X6"/>
<dbReference type="PRO" id="PR:Q9Y7X6"/>
<dbReference type="Proteomes" id="UP000002485">
    <property type="component" value="Chromosome II"/>
</dbReference>
<dbReference type="GO" id="GO:0005783">
    <property type="term" value="C:endoplasmic reticulum"/>
    <property type="evidence" value="ECO:0007005"/>
    <property type="project" value="PomBase"/>
</dbReference>
<dbReference type="GO" id="GO:0005635">
    <property type="term" value="C:nuclear envelope"/>
    <property type="evidence" value="ECO:0000314"/>
    <property type="project" value="PomBase"/>
</dbReference>
<dbReference type="GO" id="GO:0031965">
    <property type="term" value="C:nuclear membrane"/>
    <property type="evidence" value="ECO:0007669"/>
    <property type="project" value="UniProtKB-SubCell"/>
</dbReference>
<dbReference type="GO" id="GO:0005886">
    <property type="term" value="C:plasma membrane"/>
    <property type="evidence" value="ECO:0000314"/>
    <property type="project" value="PomBase"/>
</dbReference>
<dbReference type="Gene3D" id="6.10.140.1430">
    <property type="match status" value="1"/>
</dbReference>
<dbReference type="InterPro" id="IPR018803">
    <property type="entry name" value="Ish1/Msc1-like"/>
</dbReference>
<dbReference type="PANTHER" id="PTHR47372">
    <property type="entry name" value="DAUER UP-REGULATED-RELATED"/>
    <property type="match status" value="1"/>
</dbReference>
<dbReference type="PANTHER" id="PTHR47372:SF11">
    <property type="entry name" value="RE19971P"/>
    <property type="match status" value="1"/>
</dbReference>
<dbReference type="Pfam" id="PF10281">
    <property type="entry name" value="Ish1"/>
    <property type="match status" value="2"/>
</dbReference>
<feature type="chain" id="PRO_0000221231" description="Stress response protein ish1">
    <location>
        <begin position="1"/>
        <end position="684"/>
    </location>
</feature>
<feature type="sequence conflict" description="In Ref. 1; AAC49262." evidence="2" ref="1">
    <original>S</original>
    <variation>C</variation>
    <location>
        <position position="418"/>
    </location>
</feature>
<feature type="sequence conflict" description="In Ref. 1; AAC49262." evidence="2" ref="1">
    <original>V</original>
    <variation>E</variation>
    <location>
        <position position="490"/>
    </location>
</feature>
<organism>
    <name type="scientific">Schizosaccharomyces pombe (strain 972 / ATCC 24843)</name>
    <name type="common">Fission yeast</name>
    <dbReference type="NCBI Taxonomy" id="284812"/>
    <lineage>
        <taxon>Eukaryota</taxon>
        <taxon>Fungi</taxon>
        <taxon>Dikarya</taxon>
        <taxon>Ascomycota</taxon>
        <taxon>Taphrinomycotina</taxon>
        <taxon>Schizosaccharomycetes</taxon>
        <taxon>Schizosaccharomycetales</taxon>
        <taxon>Schizosaccharomycetaceae</taxon>
        <taxon>Schizosaccharomyces</taxon>
    </lineage>
</organism>
<comment type="function">
    <text evidence="1">Has a role in maintaining cell viability during stationary phase induced by stress response. Activated by the spc1 MAPK pathway.</text>
</comment>
<comment type="subunit">
    <text evidence="1">Homodimer, and heterodimer with bis1.</text>
</comment>
<comment type="interaction">
    <interactant intactId="EBI-1559673">
        <id>Q9Y7X6</id>
    </interactant>
    <interactant intactId="EBI-1559662">
        <id>O59793</id>
        <label>bis1</label>
    </interactant>
    <organismsDiffer>false</organismsDiffer>
    <experiments>4</experiments>
</comment>
<comment type="subcellular location">
    <subcellularLocation>
        <location evidence="1">Nucleus membrane</location>
    </subcellularLocation>
</comment>
<comment type="sequence caution" evidence="2">
    <conflict type="frameshift">
        <sequence resource="EMBL-CDS" id="AAC49262"/>
    </conflict>
</comment>
<protein>
    <recommendedName>
        <fullName>Stress response protein ish1</fullName>
    </recommendedName>
</protein>
<reference key="1">
    <citation type="submission" date="1995-10" db="EMBL/GenBank/DDBJ databases">
        <authorList>
            <person name="Turi T.G."/>
            <person name="Mueller U.W."/>
            <person name="Sazer S."/>
            <person name="Rose J.K."/>
        </authorList>
    </citation>
    <scope>NUCLEOTIDE SEQUENCE [GENOMIC DNA]</scope>
    <source>
        <strain>BAP1</strain>
    </source>
</reference>
<reference key="2">
    <citation type="journal article" date="2002" name="Nature">
        <title>The genome sequence of Schizosaccharomyces pombe.</title>
        <authorList>
            <person name="Wood V."/>
            <person name="Gwilliam R."/>
            <person name="Rajandream M.A."/>
            <person name="Lyne M.H."/>
            <person name="Lyne R."/>
            <person name="Stewart A."/>
            <person name="Sgouros J.G."/>
            <person name="Peat N."/>
            <person name="Hayles J."/>
            <person name="Baker S.G."/>
            <person name="Basham D."/>
            <person name="Bowman S."/>
            <person name="Brooks K."/>
            <person name="Brown D."/>
            <person name="Brown S."/>
            <person name="Chillingworth T."/>
            <person name="Churcher C.M."/>
            <person name="Collins M."/>
            <person name="Connor R."/>
            <person name="Cronin A."/>
            <person name="Davis P."/>
            <person name="Feltwell T."/>
            <person name="Fraser A."/>
            <person name="Gentles S."/>
            <person name="Goble A."/>
            <person name="Hamlin N."/>
            <person name="Harris D.E."/>
            <person name="Hidalgo J."/>
            <person name="Hodgson G."/>
            <person name="Holroyd S."/>
            <person name="Hornsby T."/>
            <person name="Howarth S."/>
            <person name="Huckle E.J."/>
            <person name="Hunt S."/>
            <person name="Jagels K."/>
            <person name="James K.D."/>
            <person name="Jones L."/>
            <person name="Jones M."/>
            <person name="Leather S."/>
            <person name="McDonald S."/>
            <person name="McLean J."/>
            <person name="Mooney P."/>
            <person name="Moule S."/>
            <person name="Mungall K.L."/>
            <person name="Murphy L.D."/>
            <person name="Niblett D."/>
            <person name="Odell C."/>
            <person name="Oliver K."/>
            <person name="O'Neil S."/>
            <person name="Pearson D."/>
            <person name="Quail M.A."/>
            <person name="Rabbinowitsch E."/>
            <person name="Rutherford K.M."/>
            <person name="Rutter S."/>
            <person name="Saunders D."/>
            <person name="Seeger K."/>
            <person name="Sharp S."/>
            <person name="Skelton J."/>
            <person name="Simmonds M.N."/>
            <person name="Squares R."/>
            <person name="Squares S."/>
            <person name="Stevens K."/>
            <person name="Taylor K."/>
            <person name="Taylor R.G."/>
            <person name="Tivey A."/>
            <person name="Walsh S.V."/>
            <person name="Warren T."/>
            <person name="Whitehead S."/>
            <person name="Woodward J.R."/>
            <person name="Volckaert G."/>
            <person name="Aert R."/>
            <person name="Robben J."/>
            <person name="Grymonprez B."/>
            <person name="Weltjens I."/>
            <person name="Vanstreels E."/>
            <person name="Rieger M."/>
            <person name="Schaefer M."/>
            <person name="Mueller-Auer S."/>
            <person name="Gabel C."/>
            <person name="Fuchs M."/>
            <person name="Duesterhoeft A."/>
            <person name="Fritzc C."/>
            <person name="Holzer E."/>
            <person name="Moestl D."/>
            <person name="Hilbert H."/>
            <person name="Borzym K."/>
            <person name="Langer I."/>
            <person name="Beck A."/>
            <person name="Lehrach H."/>
            <person name="Reinhardt R."/>
            <person name="Pohl T.M."/>
            <person name="Eger P."/>
            <person name="Zimmermann W."/>
            <person name="Wedler H."/>
            <person name="Wambutt R."/>
            <person name="Purnelle B."/>
            <person name="Goffeau A."/>
            <person name="Cadieu E."/>
            <person name="Dreano S."/>
            <person name="Gloux S."/>
            <person name="Lelaure V."/>
            <person name="Mottier S."/>
            <person name="Galibert F."/>
            <person name="Aves S.J."/>
            <person name="Xiang Z."/>
            <person name="Hunt C."/>
            <person name="Moore K."/>
            <person name="Hurst S.M."/>
            <person name="Lucas M."/>
            <person name="Rochet M."/>
            <person name="Gaillardin C."/>
            <person name="Tallada V.A."/>
            <person name="Garzon A."/>
            <person name="Thode G."/>
            <person name="Daga R.R."/>
            <person name="Cruzado L."/>
            <person name="Jimenez J."/>
            <person name="Sanchez M."/>
            <person name="del Rey F."/>
            <person name="Benito J."/>
            <person name="Dominguez A."/>
            <person name="Revuelta J.L."/>
            <person name="Moreno S."/>
            <person name="Armstrong J."/>
            <person name="Forsburg S.L."/>
            <person name="Cerutti L."/>
            <person name="Lowe T."/>
            <person name="McCombie W.R."/>
            <person name="Paulsen I."/>
            <person name="Potashkin J."/>
            <person name="Shpakovski G.V."/>
            <person name="Ussery D."/>
            <person name="Barrell B.G."/>
            <person name="Nurse P."/>
        </authorList>
    </citation>
    <scope>NUCLEOTIDE SEQUENCE [LARGE SCALE GENOMIC DNA]</scope>
    <source>
        <strain>972 / ATCC 24843</strain>
    </source>
</reference>
<reference key="3">
    <citation type="journal article" date="2002" name="J. Biol. Chem.">
        <title>The fission yeast ES2 homologue, Bis1, interacts with the Ish1 stress-responsive nuclear envelope protein.</title>
        <authorList>
            <person name="Taricani L."/>
            <person name="Tejada M.L."/>
            <person name="Young P.G."/>
        </authorList>
    </citation>
    <scope>FUNCTION</scope>
    <scope>SUBUNIT</scope>
    <scope>INTERACTION WITH BIS1</scope>
    <scope>SUBCELLULAR LOCATION</scope>
</reference>
<gene>
    <name type="primary">ish1</name>
    <name type="synonym">isp1</name>
    <name type="ORF">SPBC365.12c</name>
</gene>
<evidence type="ECO:0000269" key="1">
    <source>
    </source>
</evidence>
<evidence type="ECO:0000305" key="2"/>